<feature type="chain" id="PRO_0000125527" description="Small nuclear ribonucleoprotein-associated protein B">
    <location>
        <begin position="1"/>
        <end position="196"/>
    </location>
</feature>
<feature type="domain" description="Sm" evidence="4">
    <location>
        <begin position="7"/>
        <end position="101"/>
    </location>
</feature>
<feature type="region of interest" description="Disordered" evidence="5">
    <location>
        <begin position="108"/>
        <end position="196"/>
    </location>
</feature>
<feature type="short sequence motif" description="Nuclear localization signal" evidence="3">
    <location>
        <begin position="105"/>
        <end position="132"/>
    </location>
</feature>
<feature type="compositionally biased region" description="Basic and acidic residues" evidence="5">
    <location>
        <begin position="108"/>
        <end position="118"/>
    </location>
</feature>
<feature type="compositionally biased region" description="Polar residues" evidence="5">
    <location>
        <begin position="140"/>
        <end position="181"/>
    </location>
</feature>
<feature type="helix" evidence="13">
    <location>
        <begin position="12"/>
        <end position="14"/>
    </location>
</feature>
<feature type="strand" evidence="13">
    <location>
        <begin position="18"/>
        <end position="24"/>
    </location>
</feature>
<feature type="turn" evidence="13">
    <location>
        <begin position="25"/>
        <end position="27"/>
    </location>
</feature>
<feature type="strand" evidence="13">
    <location>
        <begin position="28"/>
        <end position="37"/>
    </location>
</feature>
<feature type="strand" evidence="13">
    <location>
        <begin position="43"/>
        <end position="52"/>
    </location>
</feature>
<feature type="helix" evidence="13">
    <location>
        <begin position="55"/>
        <end position="58"/>
    </location>
</feature>
<feature type="helix" evidence="13">
    <location>
        <begin position="59"/>
        <end position="61"/>
    </location>
</feature>
<feature type="strand" evidence="13">
    <location>
        <begin position="78"/>
        <end position="87"/>
    </location>
</feature>
<feature type="helix" evidence="13">
    <location>
        <begin position="89"/>
        <end position="91"/>
    </location>
</feature>
<feature type="strand" evidence="13">
    <location>
        <begin position="92"/>
        <end position="99"/>
    </location>
</feature>
<feature type="helix" evidence="13">
    <location>
        <begin position="105"/>
        <end position="108"/>
    </location>
</feature>
<accession>P40018</accession>
<accession>D3DLS8</accession>
<proteinExistence type="evidence at protein level"/>
<name>RSMB_YEAST</name>
<reference key="1">
    <citation type="journal article" date="1998" name="Mol. Cell. Biol.">
        <title>Interactions within the yeast Sm core complex: from proteins to amino acids.</title>
        <authorList>
            <person name="Camasses A."/>
            <person name="Bragado-Nilsson E."/>
            <person name="Martin R."/>
            <person name="Seraphin B."/>
            <person name="Bordonne R."/>
        </authorList>
    </citation>
    <scope>NUCLEOTIDE SEQUENCE [GENOMIC DNA]</scope>
    <scope>INTERACTION WITH SMD3</scope>
</reference>
<reference key="2">
    <citation type="journal article" date="1999" name="EMBO J.">
        <title>Sm and Sm-like proteins assemble in two related complexes of deep evolutionary origin.</title>
        <authorList>
            <person name="Salgado-Garrido J."/>
            <person name="Bragado-Nilsson E."/>
            <person name="Kandels-Lewis S."/>
            <person name="Seraphin B."/>
        </authorList>
    </citation>
    <scope>NUCLEOTIDE SEQUENCE [GENOMIC DNA]</scope>
    <scope>RNA-BINDING</scope>
</reference>
<reference key="3">
    <citation type="journal article" date="1997" name="Nature">
        <title>The nucleotide sequence of Saccharomyces cerevisiae chromosome V.</title>
        <authorList>
            <person name="Dietrich F.S."/>
            <person name="Mulligan J.T."/>
            <person name="Hennessy K.M."/>
            <person name="Yelton M.A."/>
            <person name="Allen E."/>
            <person name="Araujo R."/>
            <person name="Aviles E."/>
            <person name="Berno A."/>
            <person name="Brennan T."/>
            <person name="Carpenter J."/>
            <person name="Chen E."/>
            <person name="Cherry J.M."/>
            <person name="Chung E."/>
            <person name="Duncan M."/>
            <person name="Guzman E."/>
            <person name="Hartzell G."/>
            <person name="Hunicke-Smith S."/>
            <person name="Hyman R.W."/>
            <person name="Kayser A."/>
            <person name="Komp C."/>
            <person name="Lashkari D."/>
            <person name="Lew H."/>
            <person name="Lin D."/>
            <person name="Mosedale D."/>
            <person name="Nakahara K."/>
            <person name="Namath A."/>
            <person name="Norgren R."/>
            <person name="Oefner P."/>
            <person name="Oh C."/>
            <person name="Petel F.X."/>
            <person name="Roberts D."/>
            <person name="Sehl P."/>
            <person name="Schramm S."/>
            <person name="Shogren T."/>
            <person name="Smith V."/>
            <person name="Taylor P."/>
            <person name="Wei Y."/>
            <person name="Botstein D."/>
            <person name="Davis R.W."/>
        </authorList>
    </citation>
    <scope>NUCLEOTIDE SEQUENCE [LARGE SCALE GENOMIC DNA]</scope>
    <source>
        <strain>ATCC 204508 / S288c</strain>
    </source>
</reference>
<reference key="4">
    <citation type="journal article" date="2014" name="G3 (Bethesda)">
        <title>The reference genome sequence of Saccharomyces cerevisiae: Then and now.</title>
        <authorList>
            <person name="Engel S.R."/>
            <person name="Dietrich F.S."/>
            <person name="Fisk D.G."/>
            <person name="Binkley G."/>
            <person name="Balakrishnan R."/>
            <person name="Costanzo M.C."/>
            <person name="Dwight S.S."/>
            <person name="Hitz B.C."/>
            <person name="Karra K."/>
            <person name="Nash R.S."/>
            <person name="Weng S."/>
            <person name="Wong E.D."/>
            <person name="Lloyd P."/>
            <person name="Skrzypek M.S."/>
            <person name="Miyasato S.R."/>
            <person name="Simison M."/>
            <person name="Cherry J.M."/>
        </authorList>
    </citation>
    <scope>GENOME REANNOTATION</scope>
    <source>
        <strain>ATCC 204508 / S288c</strain>
    </source>
</reference>
<reference key="5">
    <citation type="journal article" date="2007" name="Genome Res.">
        <title>Approaching a complete repository of sequence-verified protein-encoding clones for Saccharomyces cerevisiae.</title>
        <authorList>
            <person name="Hu Y."/>
            <person name="Rolfs A."/>
            <person name="Bhullar B."/>
            <person name="Murthy T.V.S."/>
            <person name="Zhu C."/>
            <person name="Berger M.F."/>
            <person name="Camargo A.A."/>
            <person name="Kelley F."/>
            <person name="McCarron S."/>
            <person name="Jepson D."/>
            <person name="Richardson A."/>
            <person name="Raphael J."/>
            <person name="Moreira D."/>
            <person name="Taycher E."/>
            <person name="Zuo D."/>
            <person name="Mohr S."/>
            <person name="Kane M.F."/>
            <person name="Williamson J."/>
            <person name="Simpson A.J.G."/>
            <person name="Bulyk M.L."/>
            <person name="Harlow E."/>
            <person name="Marsischky G."/>
            <person name="Kolodner R.D."/>
            <person name="LaBaer J."/>
        </authorList>
    </citation>
    <scope>NUCLEOTIDE SEQUENCE [GENOMIC DNA]</scope>
    <source>
        <strain>ATCC 204508 / S288c</strain>
    </source>
</reference>
<reference key="6">
    <citation type="journal article" date="1998" name="RNA">
        <title>A comprehensive biochemical and genetic analysis of the yeast U1 snRNP reveals five novel proteins.</title>
        <authorList>
            <person name="Gottschalk A."/>
            <person name="Tang J."/>
            <person name="Puig O."/>
            <person name="Salgado J."/>
            <person name="Neubauer G."/>
            <person name="Colot H.V."/>
            <person name="Mann M."/>
            <person name="Seraphin B."/>
            <person name="Rosbash M."/>
            <person name="Luehrmann R."/>
            <person name="Fabrizio P."/>
        </authorList>
    </citation>
    <scope>PROTEIN SEQUENCE OF 12-19 AND 81-88</scope>
</reference>
<reference key="7">
    <citation type="journal article" date="1999" name="EMBO J.">
        <title>Identification by mass spectrometry and functional analysis of novel proteins of the yeast [U4/U6.U5] tri-snRNP.</title>
        <authorList>
            <person name="Gottschalk A."/>
            <person name="Neubauer G."/>
            <person name="Banroques J."/>
            <person name="Mann M."/>
            <person name="Luehrmann R."/>
            <person name="Fabrizio P."/>
        </authorList>
    </citation>
    <scope>SUBUNIT</scope>
    <scope>IDENTIFICATION IN THE U4/U5/U6 TRI-SNRNP COMPLEX</scope>
    <scope>IDENTIFICATION BY MASS SPECTROMETRY</scope>
</reference>
<reference key="8">
    <citation type="journal article" date="2000" name="Mol. Cell. Biol.">
        <title>Functional characterization of nuclear localization signals in yeast Sm proteins.</title>
        <authorList>
            <person name="Bordonne R."/>
        </authorList>
    </citation>
    <scope>NUCLEAR LOCALIZATION SIGNAL</scope>
</reference>
<reference key="9">
    <citation type="journal article" date="2001" name="J. Mol. Biol.">
        <title>Stoichiometry of the Sm proteins in yeast spliceosomal snRNPs supports the heptamer ring model of the core domain.</title>
        <authorList>
            <person name="Walke S."/>
            <person name="Bragado-Nilsson E."/>
            <person name="Seraphin B."/>
            <person name="Nagai K."/>
        </authorList>
    </citation>
    <scope>SUBUNIT</scope>
</reference>
<reference key="10">
    <citation type="journal article" date="2002" name="Mol. Cell">
        <title>Composition and functional characterization of the yeast spliceosomal penta-snRNP.</title>
        <authorList>
            <person name="Stevens S.W."/>
            <person name="Ryan D.E."/>
            <person name="Ge H.Y."/>
            <person name="Moore R.E."/>
            <person name="Young M.K."/>
            <person name="Lee T.D."/>
            <person name="Abelson J."/>
        </authorList>
    </citation>
    <scope>CHARACTERIZATION OF THE SPLICEOSOME</scope>
</reference>
<reference key="11">
    <citation type="journal article" date="2002" name="Mol. Cell">
        <title>Hypermethylation of the cap structure of both yeast snRNAs and snoRNAs requires a conserved methyltransferase that is localized to the nucleolus.</title>
        <authorList>
            <person name="Mouaikel J."/>
            <person name="Verheggen C."/>
            <person name="Bertrand E."/>
            <person name="Tazi J."/>
            <person name="Bordonne R."/>
        </authorList>
    </citation>
    <scope>INTERACTION WITH TGS1</scope>
</reference>
<reference key="12">
    <citation type="journal article" date="2002" name="Mol. Cell. Biol.">
        <title>Proteomics analysis reveals stable multiprotein complexes in both fission and budding yeasts containing Myb-related Cdc5p/Cef1p, novel pre-mRNA splicing factors, and snRNAs.</title>
        <authorList>
            <person name="Ohi M.D."/>
            <person name="Link A.J."/>
            <person name="Ren L."/>
            <person name="Jennings J.L."/>
            <person name="McDonald W.H."/>
            <person name="Gould K.L."/>
        </authorList>
    </citation>
    <scope>IDENTIFICATION IN THE CWC COMPLEX</scope>
    <scope>IDENTIFICATION BY MASS SPECTROMETRY</scope>
</reference>
<reference key="13">
    <citation type="journal article" date="2003" name="Mol. Cell">
        <title>Assigning function to yeast proteins by integration of technologies.</title>
        <authorList>
            <person name="Hazbun T.R."/>
            <person name="Malmstroem L."/>
            <person name="Anderson S."/>
            <person name="Graczyk B.J."/>
            <person name="Fox B."/>
            <person name="Riffle M."/>
            <person name="Sundin B.A."/>
            <person name="Aranda J.D."/>
            <person name="McDonald W.H."/>
            <person name="Chiu C.-H."/>
            <person name="Snydsman B.E."/>
            <person name="Bradley P."/>
            <person name="Muller E.G.D."/>
            <person name="Fields S."/>
            <person name="Baker D."/>
            <person name="Yates J.R. III"/>
            <person name="Davis T.N."/>
        </authorList>
    </citation>
    <scope>IDENTIFICATION BY MASS SPECTROMETRY</scope>
</reference>
<reference key="14">
    <citation type="journal article" date="2003" name="Nature">
        <title>Global analysis of protein expression in yeast.</title>
        <authorList>
            <person name="Ghaemmaghami S."/>
            <person name="Huh W.-K."/>
            <person name="Bower K."/>
            <person name="Howson R.W."/>
            <person name="Belle A."/>
            <person name="Dephoure N."/>
            <person name="O'Shea E.K."/>
            <person name="Weissman J.S."/>
        </authorList>
    </citation>
    <scope>LEVEL OF PROTEIN EXPRESSION [LARGE SCALE ANALYSIS]</scope>
</reference>
<reference key="15">
    <citation type="journal article" date="2012" name="Proc. Natl. Acad. Sci. U.S.A.">
        <title>N-terminal acetylome analyses and functional insights of the N-terminal acetyltransferase NatB.</title>
        <authorList>
            <person name="Van Damme P."/>
            <person name="Lasa M."/>
            <person name="Polevoda B."/>
            <person name="Gazquez C."/>
            <person name="Elosegui-Artola A."/>
            <person name="Kim D.S."/>
            <person name="De Juan-Pardo E."/>
            <person name="Demeyer K."/>
            <person name="Hole K."/>
            <person name="Larrea E."/>
            <person name="Timmerman E."/>
            <person name="Prieto J."/>
            <person name="Arnesen T."/>
            <person name="Sherman F."/>
            <person name="Gevaert K."/>
            <person name="Aldabe R."/>
        </authorList>
    </citation>
    <scope>IDENTIFICATION BY MASS SPECTROMETRY [LARGE SCALE ANALYSIS]</scope>
</reference>
<organism>
    <name type="scientific">Saccharomyces cerevisiae (strain ATCC 204508 / S288c)</name>
    <name type="common">Baker's yeast</name>
    <dbReference type="NCBI Taxonomy" id="559292"/>
    <lineage>
        <taxon>Eukaryota</taxon>
        <taxon>Fungi</taxon>
        <taxon>Dikarya</taxon>
        <taxon>Ascomycota</taxon>
        <taxon>Saccharomycotina</taxon>
        <taxon>Saccharomycetes</taxon>
        <taxon>Saccharomycetales</taxon>
        <taxon>Saccharomycetaceae</taxon>
        <taxon>Saccharomyces</taxon>
    </lineage>
</organism>
<keyword id="KW-0002">3D-structure</keyword>
<keyword id="KW-0963">Cytoplasm</keyword>
<keyword id="KW-0903">Direct protein sequencing</keyword>
<keyword id="KW-0507">mRNA processing</keyword>
<keyword id="KW-0508">mRNA splicing</keyword>
<keyword id="KW-0539">Nucleus</keyword>
<keyword id="KW-1185">Reference proteome</keyword>
<keyword id="KW-0687">Ribonucleoprotein</keyword>
<keyword id="KW-0694">RNA-binding</keyword>
<protein>
    <recommendedName>
        <fullName>Small nuclear ribonucleoprotein-associated protein B</fullName>
        <shortName>snRNP-B</shortName>
    </recommendedName>
    <alternativeName>
        <fullName>Sm protein B</fullName>
        <shortName>Sm-B</shortName>
        <shortName>SmB</shortName>
    </alternativeName>
</protein>
<evidence type="ECO:0000250" key="1">
    <source>
        <dbReference type="UniProtKB" id="P14678"/>
    </source>
</evidence>
<evidence type="ECO:0000250" key="2">
    <source>
        <dbReference type="UniProtKB" id="Q10163"/>
    </source>
</evidence>
<evidence type="ECO:0000255" key="3"/>
<evidence type="ECO:0000255" key="4">
    <source>
        <dbReference type="PROSITE-ProRule" id="PRU01346"/>
    </source>
</evidence>
<evidence type="ECO:0000256" key="5">
    <source>
        <dbReference type="SAM" id="MobiDB-lite"/>
    </source>
</evidence>
<evidence type="ECO:0000269" key="6">
    <source>
    </source>
</evidence>
<evidence type="ECO:0000269" key="7">
    <source>
    </source>
</evidence>
<evidence type="ECO:0000269" key="8">
    <source>
    </source>
</evidence>
<evidence type="ECO:0000269" key="9">
    <source>
    </source>
</evidence>
<evidence type="ECO:0000269" key="10">
    <source>
    </source>
</evidence>
<evidence type="ECO:0000269" key="11">
    <source>
    </source>
</evidence>
<evidence type="ECO:0000305" key="12"/>
<evidence type="ECO:0007829" key="13">
    <source>
        <dbReference type="PDB" id="9DTR"/>
    </source>
</evidence>
<sequence>MSKIQVAHSSRLANLIDYKLRVLTQDGRVYIGQLMAFDKHMNLVLNECIEERVPKTQLDKLRPRKDSKDGTTLNIKVEKRVLGLTILRGEQILSTVVEDKPLLSKKERLVRDKKEKKQAQKQTKLRKEKEKKPGKIAKPNTANAKHTSSNSREIAQPSSSRYNGGNDNIGANRSRFNNEAPPQTRKFQPPPGFKRK</sequence>
<gene>
    <name type="primary">SMB1</name>
    <name type="ordered locus">YER029C</name>
</gene>
<dbReference type="EMBL" id="U18778">
    <property type="protein sequence ID" value="AAB64562.1"/>
    <property type="molecule type" value="Genomic_DNA"/>
</dbReference>
<dbReference type="EMBL" id="AY558450">
    <property type="protein sequence ID" value="AAS56776.1"/>
    <property type="molecule type" value="Genomic_DNA"/>
</dbReference>
<dbReference type="EMBL" id="BK006939">
    <property type="protein sequence ID" value="DAA07682.1"/>
    <property type="molecule type" value="Genomic_DNA"/>
</dbReference>
<dbReference type="PIR" id="S50487">
    <property type="entry name" value="S50487"/>
</dbReference>
<dbReference type="RefSeq" id="NP_010946.3">
    <property type="nucleotide sequence ID" value="NM_001178920.3"/>
</dbReference>
<dbReference type="PDB" id="3JCM">
    <property type="method" value="EM"/>
    <property type="resolution" value="3.80 A"/>
    <property type="chains" value="O/S=1-196"/>
</dbReference>
<dbReference type="PDB" id="5GAM">
    <property type="method" value="EM"/>
    <property type="resolution" value="3.70 A"/>
    <property type="chains" value="b=1-196"/>
</dbReference>
<dbReference type="PDB" id="5GAN">
    <property type="method" value="EM"/>
    <property type="resolution" value="3.60 A"/>
    <property type="chains" value="b/k=1-196"/>
</dbReference>
<dbReference type="PDB" id="5GAO">
    <property type="method" value="EM"/>
    <property type="resolution" value="3.60 A"/>
    <property type="chains" value="k=1-196"/>
</dbReference>
<dbReference type="PDB" id="5GM6">
    <property type="method" value="EM"/>
    <property type="resolution" value="3.50 A"/>
    <property type="chains" value="k=1-196"/>
</dbReference>
<dbReference type="PDB" id="5GMK">
    <property type="method" value="EM"/>
    <property type="resolution" value="3.40 A"/>
    <property type="chains" value="k/s=1-196"/>
</dbReference>
<dbReference type="PDB" id="5LJ3">
    <property type="method" value="EM"/>
    <property type="resolution" value="3.80 A"/>
    <property type="chains" value="b/k=1-196"/>
</dbReference>
<dbReference type="PDB" id="5LJ5">
    <property type="method" value="EM"/>
    <property type="resolution" value="3.80 A"/>
    <property type="chains" value="b/k=1-196"/>
</dbReference>
<dbReference type="PDB" id="5LQW">
    <property type="method" value="EM"/>
    <property type="resolution" value="5.80 A"/>
    <property type="chains" value="b=1-196"/>
</dbReference>
<dbReference type="PDB" id="5MPS">
    <property type="method" value="EM"/>
    <property type="resolution" value="3.85 A"/>
    <property type="chains" value="b=1-196"/>
</dbReference>
<dbReference type="PDB" id="5MQ0">
    <property type="method" value="EM"/>
    <property type="resolution" value="4.17 A"/>
    <property type="chains" value="b/k=1-196"/>
</dbReference>
<dbReference type="PDB" id="5NRL">
    <property type="method" value="EM"/>
    <property type="resolution" value="7.20 A"/>
    <property type="chains" value="b/k/s=1-196"/>
</dbReference>
<dbReference type="PDB" id="5WSG">
    <property type="method" value="EM"/>
    <property type="resolution" value="4.00 A"/>
    <property type="chains" value="F/k=1-196"/>
</dbReference>
<dbReference type="PDB" id="5Y88">
    <property type="method" value="EM"/>
    <property type="resolution" value="3.70 A"/>
    <property type="chains" value="a/h=1-196"/>
</dbReference>
<dbReference type="PDB" id="5YLZ">
    <property type="method" value="EM"/>
    <property type="resolution" value="3.60 A"/>
    <property type="chains" value="a/h=1-196"/>
</dbReference>
<dbReference type="PDB" id="5ZWM">
    <property type="method" value="EM"/>
    <property type="resolution" value="3.40 A"/>
    <property type="chains" value="P/a/h=1-196"/>
</dbReference>
<dbReference type="PDB" id="5ZWN">
    <property type="method" value="EM"/>
    <property type="resolution" value="3.30 A"/>
    <property type="chains" value="a=1-196"/>
</dbReference>
<dbReference type="PDB" id="5ZWO">
    <property type="method" value="EM"/>
    <property type="resolution" value="3.90 A"/>
    <property type="chains" value="P/a/h=1-196"/>
</dbReference>
<dbReference type="PDB" id="6BK8">
    <property type="method" value="EM"/>
    <property type="resolution" value="3.30 A"/>
    <property type="chains" value="f/k=1-196"/>
</dbReference>
<dbReference type="PDB" id="6EXN">
    <property type="method" value="EM"/>
    <property type="resolution" value="3.70 A"/>
    <property type="chains" value="b/k=1-196"/>
</dbReference>
<dbReference type="PDB" id="6G90">
    <property type="method" value="EM"/>
    <property type="resolution" value="4.00 A"/>
    <property type="chains" value="b/s=1-196"/>
</dbReference>
<dbReference type="PDB" id="6J6G">
    <property type="method" value="EM"/>
    <property type="resolution" value="3.20 A"/>
    <property type="chains" value="k/s=1-196"/>
</dbReference>
<dbReference type="PDB" id="6J6H">
    <property type="method" value="EM"/>
    <property type="resolution" value="3.60 A"/>
    <property type="chains" value="k/s=1-196"/>
</dbReference>
<dbReference type="PDB" id="6J6N">
    <property type="method" value="EM"/>
    <property type="resolution" value="3.86 A"/>
    <property type="chains" value="k/s=1-196"/>
</dbReference>
<dbReference type="PDB" id="6J6Q">
    <property type="method" value="EM"/>
    <property type="resolution" value="3.70 A"/>
    <property type="chains" value="k/s=1-196"/>
</dbReference>
<dbReference type="PDB" id="6N7P">
    <property type="method" value="EM"/>
    <property type="resolution" value="3.60 A"/>
    <property type="chains" value="K=1-196"/>
</dbReference>
<dbReference type="PDB" id="6N7R">
    <property type="method" value="EM"/>
    <property type="resolution" value="3.20 A"/>
    <property type="chains" value="K=1-196"/>
</dbReference>
<dbReference type="PDB" id="6N7X">
    <property type="method" value="EM"/>
    <property type="resolution" value="3.60 A"/>
    <property type="chains" value="K=1-196"/>
</dbReference>
<dbReference type="PDB" id="7B9V">
    <property type="method" value="EM"/>
    <property type="resolution" value="2.80 A"/>
    <property type="chains" value="b/k=1-196"/>
</dbReference>
<dbReference type="PDB" id="7OQB">
    <property type="method" value="EM"/>
    <property type="resolution" value="9.00 A"/>
    <property type="chains" value="s=1-196"/>
</dbReference>
<dbReference type="PDB" id="7OQC">
    <property type="method" value="EM"/>
    <property type="resolution" value="4.10 A"/>
    <property type="chains" value="b=1-196"/>
</dbReference>
<dbReference type="PDB" id="7OQE">
    <property type="method" value="EM"/>
    <property type="resolution" value="5.90 A"/>
    <property type="chains" value="b/s=1-196"/>
</dbReference>
<dbReference type="PDB" id="8W2O">
    <property type="method" value="EM"/>
    <property type="resolution" value="3.49 A"/>
    <property type="chains" value="K=1-196"/>
</dbReference>
<dbReference type="PDB" id="9DTR">
    <property type="method" value="EM"/>
    <property type="resolution" value="2.31 A"/>
    <property type="chains" value="b/k=1-196"/>
</dbReference>
<dbReference type="PDBsum" id="3JCM"/>
<dbReference type="PDBsum" id="5GAM"/>
<dbReference type="PDBsum" id="5GAN"/>
<dbReference type="PDBsum" id="5GAO"/>
<dbReference type="PDBsum" id="5GM6"/>
<dbReference type="PDBsum" id="5GMK"/>
<dbReference type="PDBsum" id="5LJ3"/>
<dbReference type="PDBsum" id="5LJ5"/>
<dbReference type="PDBsum" id="5LQW"/>
<dbReference type="PDBsum" id="5MPS"/>
<dbReference type="PDBsum" id="5MQ0"/>
<dbReference type="PDBsum" id="5NRL"/>
<dbReference type="PDBsum" id="5WSG"/>
<dbReference type="PDBsum" id="5Y88"/>
<dbReference type="PDBsum" id="5YLZ"/>
<dbReference type="PDBsum" id="5ZWM"/>
<dbReference type="PDBsum" id="5ZWN"/>
<dbReference type="PDBsum" id="5ZWO"/>
<dbReference type="PDBsum" id="6BK8"/>
<dbReference type="PDBsum" id="6EXN"/>
<dbReference type="PDBsum" id="6G90"/>
<dbReference type="PDBsum" id="6J6G"/>
<dbReference type="PDBsum" id="6J6H"/>
<dbReference type="PDBsum" id="6J6N"/>
<dbReference type="PDBsum" id="6J6Q"/>
<dbReference type="PDBsum" id="6N7P"/>
<dbReference type="PDBsum" id="6N7R"/>
<dbReference type="PDBsum" id="6N7X"/>
<dbReference type="PDBsum" id="7B9V"/>
<dbReference type="PDBsum" id="7OQB"/>
<dbReference type="PDBsum" id="7OQC"/>
<dbReference type="PDBsum" id="7OQE"/>
<dbReference type="PDBsum" id="8W2O"/>
<dbReference type="PDBsum" id="9DTR"/>
<dbReference type="EMDB" id="EMD-0360"/>
<dbReference type="EMDB" id="EMD-0361"/>
<dbReference type="EMDB" id="EMD-0686"/>
<dbReference type="EMDB" id="EMD-0687"/>
<dbReference type="EMDB" id="EMD-0691"/>
<dbReference type="EMDB" id="EMD-0692"/>
<dbReference type="EMDB" id="EMD-12106"/>
<dbReference type="EMDB" id="EMD-13028"/>
<dbReference type="EMDB" id="EMD-13029"/>
<dbReference type="EMDB" id="EMD-13033"/>
<dbReference type="EMDB" id="EMD-3539"/>
<dbReference type="EMDB" id="EMD-3541"/>
<dbReference type="EMDB" id="EMD-3683"/>
<dbReference type="EMDB" id="EMD-3979"/>
<dbReference type="EMDB" id="EMD-4055"/>
<dbReference type="EMDB" id="EMD-4057"/>
<dbReference type="EMDB" id="EMD-4364"/>
<dbReference type="EMDB" id="EMD-43753"/>
<dbReference type="EMDB" id="EMD-47157"/>
<dbReference type="EMDB" id="EMD-6817"/>
<dbReference type="EMDB" id="EMD-6839"/>
<dbReference type="EMDB" id="EMD-6972"/>
<dbReference type="EMDB" id="EMD-6973"/>
<dbReference type="EMDB" id="EMD-6974"/>
<dbReference type="EMDB" id="EMD-7109"/>
<dbReference type="EMDB" id="EMD-8011"/>
<dbReference type="EMDB" id="EMD-8012"/>
<dbReference type="EMDB" id="EMD-8013"/>
<dbReference type="EMDB" id="EMD-8622"/>
<dbReference type="EMDB" id="EMD-9524"/>
<dbReference type="EMDB" id="EMD-9525"/>
<dbReference type="SMR" id="P40018"/>
<dbReference type="BioGRID" id="36764">
    <property type="interactions" value="132"/>
</dbReference>
<dbReference type="ComplexPortal" id="CPX-1651">
    <property type="entry name" value="PRP19-associated complex"/>
</dbReference>
<dbReference type="ComplexPortal" id="CPX-23">
    <property type="entry name" value="U1 small nuclear ribonucleoprotein complex"/>
</dbReference>
<dbReference type="ComplexPortal" id="CPX-25">
    <property type="entry name" value="U4/U6.U5 tri-small nuclear ribonucleoprotein complex"/>
</dbReference>
<dbReference type="ComplexPortal" id="CPX-26">
    <property type="entry name" value="U2 small nuclear ribonucleoprotein complex"/>
</dbReference>
<dbReference type="ComplexPortal" id="CPX-29">
    <property type="entry name" value="U5 small nuclear ribonucleoprotein complex"/>
</dbReference>
<dbReference type="ComplexPortal" id="CPX-30">
    <property type="entry name" value="U5 small nuclear ribonucleoprotein complex, AAR2 variant"/>
</dbReference>
<dbReference type="ComplexPortal" id="CPX-31">
    <property type="entry name" value="U4 small nuclear ribonucleoprotein complex"/>
</dbReference>
<dbReference type="ComplexPortal" id="CPX-32">
    <property type="entry name" value="U4/U6 small nuclear ribonucleoprotein complex"/>
</dbReference>
<dbReference type="ComplexPortal" id="CPX-43">
    <property type="entry name" value="Sm complex"/>
</dbReference>
<dbReference type="DIP" id="DIP-843N"/>
<dbReference type="FunCoup" id="P40018">
    <property type="interactions" value="534"/>
</dbReference>
<dbReference type="IntAct" id="P40018">
    <property type="interactions" value="81"/>
</dbReference>
<dbReference type="MINT" id="P40018"/>
<dbReference type="STRING" id="4932.YER029C"/>
<dbReference type="GlyGen" id="P40018">
    <property type="glycosylation" value="1 site, 1 O-linked glycan (1 site)"/>
</dbReference>
<dbReference type="iPTMnet" id="P40018"/>
<dbReference type="PaxDb" id="4932-YER029C"/>
<dbReference type="PeptideAtlas" id="P40018"/>
<dbReference type="EnsemblFungi" id="YER029C_mRNA">
    <property type="protein sequence ID" value="YER029C"/>
    <property type="gene ID" value="YER029C"/>
</dbReference>
<dbReference type="GeneID" id="856751"/>
<dbReference type="KEGG" id="sce:YER029C"/>
<dbReference type="AGR" id="SGD:S000000831"/>
<dbReference type="SGD" id="S000000831">
    <property type="gene designation" value="SMB1"/>
</dbReference>
<dbReference type="VEuPathDB" id="FungiDB:YER029C"/>
<dbReference type="eggNOG" id="KOG3168">
    <property type="taxonomic scope" value="Eukaryota"/>
</dbReference>
<dbReference type="GeneTree" id="ENSGT00940000170258"/>
<dbReference type="HOGENOM" id="CLU_076902_1_2_1"/>
<dbReference type="InParanoid" id="P40018"/>
<dbReference type="OMA" id="VRKFQPP"/>
<dbReference type="OrthoDB" id="2020720at2759"/>
<dbReference type="BioCyc" id="YEAST:G3O-30210-MONOMER"/>
<dbReference type="BioGRID-ORCS" id="856751">
    <property type="hits" value="1 hit in 10 CRISPR screens"/>
</dbReference>
<dbReference type="EvolutionaryTrace" id="P40018"/>
<dbReference type="PRO" id="PR:P40018"/>
<dbReference type="Proteomes" id="UP000002311">
    <property type="component" value="Chromosome V"/>
</dbReference>
<dbReference type="RNAct" id="P40018">
    <property type="molecule type" value="protein"/>
</dbReference>
<dbReference type="GO" id="GO:0071013">
    <property type="term" value="C:catalytic step 2 spliceosome"/>
    <property type="evidence" value="ECO:0000318"/>
    <property type="project" value="GO_Central"/>
</dbReference>
<dbReference type="GO" id="GO:0000243">
    <property type="term" value="C:commitment complex"/>
    <property type="evidence" value="ECO:0000303"/>
    <property type="project" value="ComplexPortal"/>
</dbReference>
<dbReference type="GO" id="GO:0005737">
    <property type="term" value="C:cytoplasm"/>
    <property type="evidence" value="ECO:0000318"/>
    <property type="project" value="GO_Central"/>
</dbReference>
<dbReference type="GO" id="GO:0005634">
    <property type="term" value="C:nucleus"/>
    <property type="evidence" value="ECO:0000303"/>
    <property type="project" value="ComplexPortal"/>
</dbReference>
<dbReference type="GO" id="GO:0000974">
    <property type="term" value="C:Prp19 complex"/>
    <property type="evidence" value="ECO:0000353"/>
    <property type="project" value="ComplexPortal"/>
</dbReference>
<dbReference type="GO" id="GO:0005681">
    <property type="term" value="C:spliceosomal complex"/>
    <property type="evidence" value="ECO:0000303"/>
    <property type="project" value="ComplexPortal"/>
</dbReference>
<dbReference type="GO" id="GO:0005685">
    <property type="term" value="C:U1 snRNP"/>
    <property type="evidence" value="ECO:0000314"/>
    <property type="project" value="SGD"/>
</dbReference>
<dbReference type="GO" id="GO:0005686">
    <property type="term" value="C:U2 snRNP"/>
    <property type="evidence" value="ECO:0000318"/>
    <property type="project" value="GO_Central"/>
</dbReference>
<dbReference type="GO" id="GO:0071004">
    <property type="term" value="C:U2-type prespliceosome"/>
    <property type="evidence" value="ECO:0000314"/>
    <property type="project" value="SGD"/>
</dbReference>
<dbReference type="GO" id="GO:0005687">
    <property type="term" value="C:U4 snRNP"/>
    <property type="evidence" value="ECO:0000353"/>
    <property type="project" value="ComplexPortal"/>
</dbReference>
<dbReference type="GO" id="GO:0071001">
    <property type="term" value="C:U4/U6 snRNP"/>
    <property type="evidence" value="ECO:0000303"/>
    <property type="project" value="ComplexPortal"/>
</dbReference>
<dbReference type="GO" id="GO:0046540">
    <property type="term" value="C:U4/U6 x U5 tri-snRNP complex"/>
    <property type="evidence" value="ECO:0000314"/>
    <property type="project" value="SGD"/>
</dbReference>
<dbReference type="GO" id="GO:0005682">
    <property type="term" value="C:U5 snRNP"/>
    <property type="evidence" value="ECO:0000314"/>
    <property type="project" value="SGD"/>
</dbReference>
<dbReference type="GO" id="GO:0003723">
    <property type="term" value="F:RNA binding"/>
    <property type="evidence" value="ECO:0007669"/>
    <property type="project" value="UniProtKB-KW"/>
</dbReference>
<dbReference type="GO" id="GO:0070990">
    <property type="term" value="F:snRNP binding"/>
    <property type="evidence" value="ECO:0000318"/>
    <property type="project" value="GO_Central"/>
</dbReference>
<dbReference type="GO" id="GO:0036261">
    <property type="term" value="P:7-methylguanosine cap hypermethylation"/>
    <property type="evidence" value="ECO:0000315"/>
    <property type="project" value="ComplexPortal"/>
</dbReference>
<dbReference type="GO" id="GO:0000395">
    <property type="term" value="P:mRNA 5'-splice site recognition"/>
    <property type="evidence" value="ECO:0000303"/>
    <property type="project" value="ComplexPortal"/>
</dbReference>
<dbReference type="GO" id="GO:0000398">
    <property type="term" value="P:mRNA splicing, via spliceosome"/>
    <property type="evidence" value="ECO:0000353"/>
    <property type="project" value="ComplexPortal"/>
</dbReference>
<dbReference type="GO" id="GO:0000245">
    <property type="term" value="P:spliceosomal complex assembly"/>
    <property type="evidence" value="ECO:0000303"/>
    <property type="project" value="ComplexPortal"/>
</dbReference>
<dbReference type="GO" id="GO:0000387">
    <property type="term" value="P:spliceosomal snRNP assembly"/>
    <property type="evidence" value="ECO:0000303"/>
    <property type="project" value="ComplexPortal"/>
</dbReference>
<dbReference type="GO" id="GO:1903241">
    <property type="term" value="P:U2-type prespliceosome assembly"/>
    <property type="evidence" value="ECO:0000303"/>
    <property type="project" value="ComplexPortal"/>
</dbReference>
<dbReference type="CDD" id="cd01717">
    <property type="entry name" value="Sm_B"/>
    <property type="match status" value="1"/>
</dbReference>
<dbReference type="FunFam" id="2.30.30.100:FF:000079">
    <property type="entry name" value="Sm B"/>
    <property type="match status" value="1"/>
</dbReference>
<dbReference type="Gene3D" id="2.30.30.100">
    <property type="match status" value="1"/>
</dbReference>
<dbReference type="InterPro" id="IPR010920">
    <property type="entry name" value="LSM_dom_sf"/>
</dbReference>
<dbReference type="InterPro" id="IPR047575">
    <property type="entry name" value="Sm"/>
</dbReference>
<dbReference type="InterPro" id="IPR001163">
    <property type="entry name" value="Sm_dom_euk/arc"/>
</dbReference>
<dbReference type="InterPro" id="IPR050914">
    <property type="entry name" value="snRNP_SmB/NAA38-like"/>
</dbReference>
<dbReference type="PANTHER" id="PTHR10701:SF0">
    <property type="entry name" value="SMALL NUCLEAR RIBONUCLEOPROTEIN-ASSOCIATED PROTEIN B"/>
    <property type="match status" value="1"/>
</dbReference>
<dbReference type="PANTHER" id="PTHR10701">
    <property type="entry name" value="SMALL NUCLEAR RIBONUCLEOPROTEIN-ASSOCIATED PROTEIN B AND N"/>
    <property type="match status" value="1"/>
</dbReference>
<dbReference type="Pfam" id="PF01423">
    <property type="entry name" value="LSM"/>
    <property type="match status" value="1"/>
</dbReference>
<dbReference type="SMART" id="SM00651">
    <property type="entry name" value="Sm"/>
    <property type="match status" value="1"/>
</dbReference>
<dbReference type="SUPFAM" id="SSF50182">
    <property type="entry name" value="Sm-like ribonucleoproteins"/>
    <property type="match status" value="1"/>
</dbReference>
<dbReference type="PROSITE" id="PS52002">
    <property type="entry name" value="SM"/>
    <property type="match status" value="1"/>
</dbReference>
<comment type="function">
    <text evidence="1">Plays a role in pre-mRNA splicing as a core component of the spliceosomal U1, U2, U4 and U5 small nuclear ribonucleoproteins (snRNPs), the building blocks of the spliceosome (By similarity).</text>
</comment>
<comment type="subunit">
    <text evidence="6 7 8 9 11">Component of the Sm core complex, present in spliceosomal snRNP U1, U2, U4/U6 and U5. The core complex contains SMB1, SMD1, SMD2, SMD3, SME1, SMX3 and SMX2 (Sm proteins B, D1, D2, D3, E, F and G, respectively), and is probably a heptameric ring structure. SMB1 specifically interacts with SMD3. Belongs to the CWC complex (or CEF1-associated complex), a spliceosome sub-complex reminiscent of a late-stage spliceosome composed of the U2, U5 and U6 snRNAs and at least BUD13, BUD31, BRR2, CDC40, CEF1, CLF1, CUS1, CWC2, CWC15, CWC21, CWC22, CWC23, CWC24, CWC25, CWC27, ECM2, HSH155, IST3, ISY1, LEA1, MSL1, NTC20, PRP8, PRP9, PRP11, PRP19, PRP21, PRP22, PRP45, PRP46, SLU7, SMB1, SMD1, SMD2, SMD3, SMX2, SMX3, SNT309, SNU114, SPP2, SYF1, SYF2, RSE1 and YJU2. Component of the U4/U6-U5 tri-snRNP complex composed of the U4, U6 and U5 snRNAs and at least PRP3, PRP4, PRP6, PRP8, PRP18, PRP38, SNU13, SNU23, SNU66, SNU114, SPP381, SMB1, SMD1, SMD2, SMD3, SMX2, SMX3, LSM2, LSM3, LSM4, LSM5, LSM6, LSM7, LSM8, BRR2 and DIB1. Interacts with the trimethylguanosine synthase TGS1.</text>
</comment>
<comment type="interaction">
    <interactant intactId="EBI-432">
        <id>P40018</id>
    </interactant>
    <interactant intactId="EBI-529">
        <id>P43321</id>
        <label>SMD3</label>
    </interactant>
    <organismsDiffer>false</organismsDiffer>
    <experiments>4</experiments>
</comment>
<comment type="subcellular location">
    <subcellularLocation>
        <location evidence="2">Nucleus</location>
    </subcellularLocation>
    <subcellularLocation>
        <location evidence="2">Cytoplasm</location>
    </subcellularLocation>
</comment>
<comment type="domain">
    <text>C-terminal extension may function as a nuclear localization signal (NLS).</text>
</comment>
<comment type="miscellaneous">
    <text evidence="10">Present with 861 molecules/cell in log phase SD medium.</text>
</comment>
<comment type="similarity">
    <text evidence="12">Belongs to the snRNP SmB/SmN family.</text>
</comment>